<reference key="1">
    <citation type="journal article" date="2007" name="J. Bacteriol.">
        <title>Genome sequence analysis of the emerging human pathogenic acetic acid bacterium Granulibacter bethesdensis.</title>
        <authorList>
            <person name="Greenberg D.E."/>
            <person name="Porcella S.F."/>
            <person name="Zelazny A.M."/>
            <person name="Virtaneva K."/>
            <person name="Sturdevant D.E."/>
            <person name="Kupko J.J. III"/>
            <person name="Barbian K.D."/>
            <person name="Babar A."/>
            <person name="Dorward D.W."/>
            <person name="Holland S.M."/>
        </authorList>
    </citation>
    <scope>NUCLEOTIDE SEQUENCE [LARGE SCALE GENOMIC DNA]</scope>
    <source>
        <strain>ATCC BAA-1260 / CGDNIH1</strain>
    </source>
</reference>
<sequence length="382" mass="40394">MQTLDDFAARRLSALEKRQLSRVLHETGRDSSPWVMRGERRMLSLSCNDYLNLSTHPATIRAAIDATAQFGVGAGGSRLVTGNHPLYTALEVRLAALKGTEAAIVFGSGFLANIGIIPALIAPNDLILVDELAHACIHAGAALAHARTIRFPHNDMQALAGLLEQERPQHDHVLIVTDGVFSMDGDLAPMSALVELSARYNAWLMTDDAHGIGVLNEGHGSAYGHDVPLQMGTLSKAVGAYGGYLCASAPVVALIRNRARSFIYTTGLPPGTLAAAITALDLIAADPALTMQPLEKAKLFTRLTSLPDAQSPIVPILLGSAEAALSASAMLAEHDYLAAAIRPPTVPAGTARLRLTFTALTPDSDIMRLAELIRPLLSDTAG</sequence>
<keyword id="KW-0012">Acyltransferase</keyword>
<keyword id="KW-0093">Biotin biosynthesis</keyword>
<keyword id="KW-0663">Pyridoxal phosphate</keyword>
<keyword id="KW-1185">Reference proteome</keyword>
<keyword id="KW-0808">Transferase</keyword>
<gene>
    <name type="ordered locus">GbCGDNIH1_0498</name>
</gene>
<protein>
    <recommendedName>
        <fullName>8-amino-7-oxononanoate synthase</fullName>
        <shortName>AONS</shortName>
        <ecNumber>2.3.1.47</ecNumber>
    </recommendedName>
    <alternativeName>
        <fullName>7-keto-8-amino-pelargonic acid synthase</fullName>
        <shortName>7-KAP synthase</shortName>
        <shortName>KAPA synthase</shortName>
    </alternativeName>
    <alternativeName>
        <fullName>8-amino-7-ketopelargonate synthase</fullName>
    </alternativeName>
    <alternativeName>
        <fullName>Alpha-oxoamine synthase</fullName>
    </alternativeName>
</protein>
<proteinExistence type="inferred from homology"/>
<evidence type="ECO:0000250" key="1"/>
<evidence type="ECO:0000305" key="2"/>
<organism>
    <name type="scientific">Granulibacter bethesdensis (strain ATCC BAA-1260 / CGDNIH1)</name>
    <dbReference type="NCBI Taxonomy" id="391165"/>
    <lineage>
        <taxon>Bacteria</taxon>
        <taxon>Pseudomonadati</taxon>
        <taxon>Pseudomonadota</taxon>
        <taxon>Alphaproteobacteria</taxon>
        <taxon>Acetobacterales</taxon>
        <taxon>Acetobacteraceae</taxon>
        <taxon>Granulibacter</taxon>
    </lineage>
</organism>
<accession>Q0BUV6</accession>
<feature type="chain" id="PRO_0000381002" description="8-amino-7-oxononanoate synthase">
    <location>
        <begin position="1"/>
        <end position="382"/>
    </location>
</feature>
<feature type="binding site" evidence="1">
    <location>
        <position position="22"/>
    </location>
    <ligand>
        <name>substrate</name>
    </ligand>
</feature>
<feature type="binding site" evidence="1">
    <location>
        <position position="29"/>
    </location>
    <ligand>
        <name>substrate</name>
    </ligand>
</feature>
<feature type="binding site" evidence="1">
    <location>
        <begin position="109"/>
        <end position="110"/>
    </location>
    <ligand>
        <name>pyridoxal 5'-phosphate</name>
        <dbReference type="ChEBI" id="CHEBI:597326"/>
    </ligand>
</feature>
<feature type="binding site" evidence="1">
    <location>
        <position position="134"/>
    </location>
    <ligand>
        <name>substrate</name>
    </ligand>
</feature>
<feature type="binding site" evidence="1">
    <location>
        <position position="182"/>
    </location>
    <ligand>
        <name>pyridoxal 5'-phosphate</name>
        <dbReference type="ChEBI" id="CHEBI:597326"/>
    </ligand>
</feature>
<feature type="binding site" evidence="1">
    <location>
        <begin position="207"/>
        <end position="210"/>
    </location>
    <ligand>
        <name>pyridoxal 5'-phosphate</name>
        <dbReference type="ChEBI" id="CHEBI:597326"/>
    </ligand>
</feature>
<feature type="binding site" evidence="1">
    <location>
        <begin position="233"/>
        <end position="236"/>
    </location>
    <ligand>
        <name>pyridoxal 5'-phosphate</name>
        <dbReference type="ChEBI" id="CHEBI:597326"/>
    </ligand>
</feature>
<feature type="binding site" evidence="1">
    <location>
        <position position="345"/>
    </location>
    <ligand>
        <name>substrate</name>
    </ligand>
</feature>
<feature type="modified residue" description="N6-(pyridoxal phosphate)lysine" evidence="1">
    <location>
        <position position="236"/>
    </location>
</feature>
<name>BIOF_GRABC</name>
<dbReference type="EC" id="2.3.1.47"/>
<dbReference type="EMBL" id="CP000394">
    <property type="protein sequence ID" value="ABI61396.1"/>
    <property type="status" value="ALT_INIT"/>
    <property type="molecule type" value="Genomic_DNA"/>
</dbReference>
<dbReference type="RefSeq" id="WP_043453557.1">
    <property type="nucleotide sequence ID" value="NC_008343.2"/>
</dbReference>
<dbReference type="SMR" id="Q0BUV6"/>
<dbReference type="STRING" id="391165.GbCGDNIH1_0498"/>
<dbReference type="KEGG" id="gbe:GbCGDNIH1_0498"/>
<dbReference type="eggNOG" id="COG0156">
    <property type="taxonomic scope" value="Bacteria"/>
</dbReference>
<dbReference type="HOGENOM" id="CLU_015846_11_0_5"/>
<dbReference type="OrthoDB" id="9807157at2"/>
<dbReference type="UniPathway" id="UPA00078"/>
<dbReference type="Proteomes" id="UP000001963">
    <property type="component" value="Chromosome"/>
</dbReference>
<dbReference type="GO" id="GO:0008710">
    <property type="term" value="F:8-amino-7-oxononanoate synthase activity"/>
    <property type="evidence" value="ECO:0007669"/>
    <property type="project" value="UniProtKB-EC"/>
</dbReference>
<dbReference type="GO" id="GO:0030170">
    <property type="term" value="F:pyridoxal phosphate binding"/>
    <property type="evidence" value="ECO:0007669"/>
    <property type="project" value="InterPro"/>
</dbReference>
<dbReference type="GO" id="GO:0009102">
    <property type="term" value="P:biotin biosynthetic process"/>
    <property type="evidence" value="ECO:0007669"/>
    <property type="project" value="UniProtKB-UniPathway"/>
</dbReference>
<dbReference type="Gene3D" id="3.90.1150.10">
    <property type="entry name" value="Aspartate Aminotransferase, domain 1"/>
    <property type="match status" value="1"/>
</dbReference>
<dbReference type="Gene3D" id="3.40.640.10">
    <property type="entry name" value="Type I PLP-dependent aspartate aminotransferase-like (Major domain)"/>
    <property type="match status" value="1"/>
</dbReference>
<dbReference type="InterPro" id="IPR001917">
    <property type="entry name" value="Aminotrans_II_pyridoxalP_BS"/>
</dbReference>
<dbReference type="InterPro" id="IPR004839">
    <property type="entry name" value="Aminotransferase_I/II_large"/>
</dbReference>
<dbReference type="InterPro" id="IPR050087">
    <property type="entry name" value="AON_synthase_class-II"/>
</dbReference>
<dbReference type="InterPro" id="IPR015424">
    <property type="entry name" value="PyrdxlP-dep_Trfase"/>
</dbReference>
<dbReference type="InterPro" id="IPR015421">
    <property type="entry name" value="PyrdxlP-dep_Trfase_major"/>
</dbReference>
<dbReference type="InterPro" id="IPR015422">
    <property type="entry name" value="PyrdxlP-dep_Trfase_small"/>
</dbReference>
<dbReference type="PANTHER" id="PTHR13693:SF100">
    <property type="entry name" value="8-AMINO-7-OXONONANOATE SYNTHASE"/>
    <property type="match status" value="1"/>
</dbReference>
<dbReference type="PANTHER" id="PTHR13693">
    <property type="entry name" value="CLASS II AMINOTRANSFERASE/8-AMINO-7-OXONONANOATE SYNTHASE"/>
    <property type="match status" value="1"/>
</dbReference>
<dbReference type="Pfam" id="PF00155">
    <property type="entry name" value="Aminotran_1_2"/>
    <property type="match status" value="1"/>
</dbReference>
<dbReference type="SUPFAM" id="SSF53383">
    <property type="entry name" value="PLP-dependent transferases"/>
    <property type="match status" value="1"/>
</dbReference>
<dbReference type="PROSITE" id="PS00599">
    <property type="entry name" value="AA_TRANSFER_CLASS_2"/>
    <property type="match status" value="1"/>
</dbReference>
<comment type="function">
    <text evidence="1">Catalyzes the decarboxylative condensation of pimeloyl-[acyl-carrier protein] and L-alanine to produce 8-amino-7-oxononanoate (AON), [acyl-carrier protein], and carbon dioxide.</text>
</comment>
<comment type="catalytic activity">
    <reaction>
        <text>6-carboxyhexanoyl-[ACP] + L-alanine + H(+) = (8S)-8-amino-7-oxononanoate + holo-[ACP] + CO2</text>
        <dbReference type="Rhea" id="RHEA:42288"/>
        <dbReference type="Rhea" id="RHEA-COMP:9685"/>
        <dbReference type="Rhea" id="RHEA-COMP:9955"/>
        <dbReference type="ChEBI" id="CHEBI:15378"/>
        <dbReference type="ChEBI" id="CHEBI:16526"/>
        <dbReference type="ChEBI" id="CHEBI:57972"/>
        <dbReference type="ChEBI" id="CHEBI:64479"/>
        <dbReference type="ChEBI" id="CHEBI:78846"/>
        <dbReference type="ChEBI" id="CHEBI:149468"/>
        <dbReference type="EC" id="2.3.1.47"/>
    </reaction>
</comment>
<comment type="cofactor">
    <cofactor evidence="1">
        <name>pyridoxal 5'-phosphate</name>
        <dbReference type="ChEBI" id="CHEBI:597326"/>
    </cofactor>
</comment>
<comment type="pathway">
    <text>Cofactor biosynthesis; biotin biosynthesis.</text>
</comment>
<comment type="subunit">
    <text evidence="1">Homodimer.</text>
</comment>
<comment type="similarity">
    <text evidence="2">Belongs to the class-II pyridoxal-phosphate-dependent aminotransferase family. BioF subfamily.</text>
</comment>
<comment type="sequence caution" evidence="2">
    <conflict type="erroneous initiation">
        <sequence resource="EMBL-CDS" id="ABI61396"/>
    </conflict>
    <text>Extended N-terminus.</text>
</comment>